<comment type="function">
    <text evidence="1">Catalyzes the transfer of a dimethylallyl group onto the adenine at position 37 in tRNAs that read codons beginning with uridine, leading to the formation of N6-(dimethylallyl)adenosine (i(6)A).</text>
</comment>
<comment type="catalytic activity">
    <reaction evidence="1">
        <text>adenosine(37) in tRNA + dimethylallyl diphosphate = N(6)-dimethylallyladenosine(37) in tRNA + diphosphate</text>
        <dbReference type="Rhea" id="RHEA:26482"/>
        <dbReference type="Rhea" id="RHEA-COMP:10162"/>
        <dbReference type="Rhea" id="RHEA-COMP:10375"/>
        <dbReference type="ChEBI" id="CHEBI:33019"/>
        <dbReference type="ChEBI" id="CHEBI:57623"/>
        <dbReference type="ChEBI" id="CHEBI:74411"/>
        <dbReference type="ChEBI" id="CHEBI:74415"/>
        <dbReference type="EC" id="2.5.1.75"/>
    </reaction>
</comment>
<comment type="cofactor">
    <cofactor evidence="1">
        <name>Mg(2+)</name>
        <dbReference type="ChEBI" id="CHEBI:18420"/>
    </cofactor>
</comment>
<comment type="subunit">
    <text evidence="1">Monomer.</text>
</comment>
<comment type="similarity">
    <text evidence="1">Belongs to the IPP transferase family.</text>
</comment>
<comment type="sequence caution" evidence="2">
    <conflict type="erroneous initiation">
        <sequence resource="EMBL-CDS" id="CAI80853"/>
    </conflict>
</comment>
<feature type="chain" id="PRO_0000377331" description="tRNA dimethylallyltransferase">
    <location>
        <begin position="1"/>
        <end position="311"/>
    </location>
</feature>
<feature type="region of interest" description="Interaction with substrate tRNA" evidence="1">
    <location>
        <begin position="38"/>
        <end position="41"/>
    </location>
</feature>
<feature type="region of interest" description="Interaction with substrate tRNA" evidence="1">
    <location>
        <begin position="166"/>
        <end position="170"/>
    </location>
</feature>
<feature type="binding site" evidence="1">
    <location>
        <begin position="13"/>
        <end position="20"/>
    </location>
    <ligand>
        <name>ATP</name>
        <dbReference type="ChEBI" id="CHEBI:30616"/>
    </ligand>
</feature>
<feature type="binding site" evidence="1">
    <location>
        <begin position="15"/>
        <end position="20"/>
    </location>
    <ligand>
        <name>substrate</name>
    </ligand>
</feature>
<feature type="site" description="Interaction with substrate tRNA" evidence="1">
    <location>
        <position position="104"/>
    </location>
</feature>
<evidence type="ECO:0000255" key="1">
    <source>
        <dbReference type="HAMAP-Rule" id="MF_00185"/>
    </source>
</evidence>
<evidence type="ECO:0000305" key="2"/>
<keyword id="KW-0067">ATP-binding</keyword>
<keyword id="KW-0460">Magnesium</keyword>
<keyword id="KW-0547">Nucleotide-binding</keyword>
<keyword id="KW-0808">Transferase</keyword>
<keyword id="KW-0819">tRNA processing</keyword>
<proteinExistence type="inferred from homology"/>
<dbReference type="EC" id="2.5.1.75" evidence="1"/>
<dbReference type="EMBL" id="AJ938182">
    <property type="protein sequence ID" value="CAI80853.1"/>
    <property type="status" value="ALT_INIT"/>
    <property type="molecule type" value="Genomic_DNA"/>
</dbReference>
<dbReference type="RefSeq" id="WP_078062653.1">
    <property type="nucleotide sequence ID" value="NC_007622.1"/>
</dbReference>
<dbReference type="SMR" id="Q2YXR3"/>
<dbReference type="KEGG" id="sab:SAB1164"/>
<dbReference type="HOGENOM" id="CLU_032616_0_1_9"/>
<dbReference type="GO" id="GO:0005524">
    <property type="term" value="F:ATP binding"/>
    <property type="evidence" value="ECO:0007669"/>
    <property type="project" value="UniProtKB-UniRule"/>
</dbReference>
<dbReference type="GO" id="GO:0052381">
    <property type="term" value="F:tRNA dimethylallyltransferase activity"/>
    <property type="evidence" value="ECO:0007669"/>
    <property type="project" value="UniProtKB-UniRule"/>
</dbReference>
<dbReference type="GO" id="GO:0006400">
    <property type="term" value="P:tRNA modification"/>
    <property type="evidence" value="ECO:0007669"/>
    <property type="project" value="TreeGrafter"/>
</dbReference>
<dbReference type="Gene3D" id="1.10.20.140">
    <property type="match status" value="1"/>
</dbReference>
<dbReference type="Gene3D" id="3.40.50.300">
    <property type="entry name" value="P-loop containing nucleotide triphosphate hydrolases"/>
    <property type="match status" value="1"/>
</dbReference>
<dbReference type="HAMAP" id="MF_00185">
    <property type="entry name" value="IPP_trans"/>
    <property type="match status" value="1"/>
</dbReference>
<dbReference type="InterPro" id="IPR039657">
    <property type="entry name" value="Dimethylallyltransferase"/>
</dbReference>
<dbReference type="InterPro" id="IPR018022">
    <property type="entry name" value="IPT"/>
</dbReference>
<dbReference type="InterPro" id="IPR027417">
    <property type="entry name" value="P-loop_NTPase"/>
</dbReference>
<dbReference type="NCBIfam" id="TIGR00174">
    <property type="entry name" value="miaA"/>
    <property type="match status" value="1"/>
</dbReference>
<dbReference type="PANTHER" id="PTHR11088">
    <property type="entry name" value="TRNA DIMETHYLALLYLTRANSFERASE"/>
    <property type="match status" value="1"/>
</dbReference>
<dbReference type="PANTHER" id="PTHR11088:SF60">
    <property type="entry name" value="TRNA DIMETHYLALLYLTRANSFERASE"/>
    <property type="match status" value="1"/>
</dbReference>
<dbReference type="Pfam" id="PF01715">
    <property type="entry name" value="IPPT"/>
    <property type="match status" value="1"/>
</dbReference>
<dbReference type="SUPFAM" id="SSF52540">
    <property type="entry name" value="P-loop containing nucleoside triphosphate hydrolases"/>
    <property type="match status" value="2"/>
</dbReference>
<name>MIAA_STAAB</name>
<reference key="1">
    <citation type="journal article" date="2007" name="PLoS ONE">
        <title>Molecular correlates of host specialization in Staphylococcus aureus.</title>
        <authorList>
            <person name="Herron-Olson L."/>
            <person name="Fitzgerald J.R."/>
            <person name="Musser J.M."/>
            <person name="Kapur V."/>
        </authorList>
    </citation>
    <scope>NUCLEOTIDE SEQUENCE [LARGE SCALE GENOMIC DNA]</scope>
    <source>
        <strain>bovine RF122 / ET3-1</strain>
    </source>
</reference>
<sequence>MNKNKPFIVVIVGPTASGKTELSIELAKRINGEIISGDSMQVYKHMNIGTAKVTPEEMDGIPHHLIDILNPDDTFSAYEFKRLAEDLITDITNRGKVPIIAGGTGLYIQSLIYNYELEDETVTSAQLSVVKQKLSALEHLDNQQLHDYLAQFDEASAKNIHPNNRQRVLRAIEYYFKTKKLLSNRKKVQQFTENYDTLLIGIEMSRKTLYSRINKRVDIMLDHGLFREVQQLVEQGYESCRSMQAIGYKELIPVINGQMIYEDAVNDLKQHSRQYAKRQMTWFKNKMSVHWLDKENMSLQMMLDEITTQIK</sequence>
<organism>
    <name type="scientific">Staphylococcus aureus (strain bovine RF122 / ET3-1)</name>
    <dbReference type="NCBI Taxonomy" id="273036"/>
    <lineage>
        <taxon>Bacteria</taxon>
        <taxon>Bacillati</taxon>
        <taxon>Bacillota</taxon>
        <taxon>Bacilli</taxon>
        <taxon>Bacillales</taxon>
        <taxon>Staphylococcaceae</taxon>
        <taxon>Staphylococcus</taxon>
    </lineage>
</organism>
<accession>Q2YXR3</accession>
<gene>
    <name evidence="1" type="primary">miaA</name>
    <name type="ordered locus">SAB1164</name>
</gene>
<protein>
    <recommendedName>
        <fullName evidence="1">tRNA dimethylallyltransferase</fullName>
        <ecNumber evidence="1">2.5.1.75</ecNumber>
    </recommendedName>
    <alternativeName>
        <fullName evidence="1">Dimethylallyl diphosphate:tRNA dimethylallyltransferase</fullName>
        <shortName evidence="1">DMAPP:tRNA dimethylallyltransferase</shortName>
        <shortName evidence="1">DMATase</shortName>
    </alternativeName>
    <alternativeName>
        <fullName evidence="1">Isopentenyl-diphosphate:tRNA isopentenyltransferase</fullName>
        <shortName evidence="1">IPP transferase</shortName>
        <shortName evidence="1">IPPT</shortName>
        <shortName evidence="1">IPTase</shortName>
    </alternativeName>
</protein>